<gene>
    <name evidence="1" type="primary">sufE</name>
    <name type="ordered locus">ECIAI1_1731</name>
</gene>
<name>SUFE_ECO8A</name>
<keyword id="KW-0963">Cytoplasm</keyword>
<feature type="chain" id="PRO_1000188323" description="Cysteine desulfuration protein SufE">
    <location>
        <begin position="1"/>
        <end position="138"/>
    </location>
</feature>
<feature type="active site" description="Cysteine persulfide intermediate" evidence="1">
    <location>
        <position position="51"/>
    </location>
</feature>
<organism>
    <name type="scientific">Escherichia coli O8 (strain IAI1)</name>
    <dbReference type="NCBI Taxonomy" id="585034"/>
    <lineage>
        <taxon>Bacteria</taxon>
        <taxon>Pseudomonadati</taxon>
        <taxon>Pseudomonadota</taxon>
        <taxon>Gammaproteobacteria</taxon>
        <taxon>Enterobacterales</taxon>
        <taxon>Enterobacteriaceae</taxon>
        <taxon>Escherichia</taxon>
    </lineage>
</organism>
<dbReference type="EMBL" id="CU928160">
    <property type="protein sequence ID" value="CAQ98588.1"/>
    <property type="molecule type" value="Genomic_DNA"/>
</dbReference>
<dbReference type="RefSeq" id="WP_001196517.1">
    <property type="nucleotide sequence ID" value="NC_011741.1"/>
</dbReference>
<dbReference type="SMR" id="B7M0N4"/>
<dbReference type="GeneID" id="75204525"/>
<dbReference type="KEGG" id="ecr:ECIAI1_1731"/>
<dbReference type="HOGENOM" id="CLU_124502_1_1_6"/>
<dbReference type="UniPathway" id="UPA00266"/>
<dbReference type="GO" id="GO:0005737">
    <property type="term" value="C:cytoplasm"/>
    <property type="evidence" value="ECO:0007669"/>
    <property type="project" value="UniProtKB-SubCell"/>
</dbReference>
<dbReference type="GO" id="GO:0016226">
    <property type="term" value="P:iron-sulfur cluster assembly"/>
    <property type="evidence" value="ECO:0007669"/>
    <property type="project" value="InterPro"/>
</dbReference>
<dbReference type="GO" id="GO:0006790">
    <property type="term" value="P:sulfur compound metabolic process"/>
    <property type="evidence" value="ECO:0007669"/>
    <property type="project" value="InterPro"/>
</dbReference>
<dbReference type="FunFam" id="3.90.1010.10:FF:000004">
    <property type="entry name" value="Cysteine desulfuration protein SufE"/>
    <property type="match status" value="1"/>
</dbReference>
<dbReference type="Gene3D" id="3.90.1010.10">
    <property type="match status" value="1"/>
</dbReference>
<dbReference type="HAMAP" id="MF_01832">
    <property type="entry name" value="SufE"/>
    <property type="match status" value="1"/>
</dbReference>
<dbReference type="InterPro" id="IPR023939">
    <property type="entry name" value="Cysteine_desulfuration_SufE"/>
</dbReference>
<dbReference type="InterPro" id="IPR003808">
    <property type="entry name" value="Fe-S_metab-assoc_dom"/>
</dbReference>
<dbReference type="NCBIfam" id="NF006792">
    <property type="entry name" value="PRK09296.1"/>
    <property type="match status" value="1"/>
</dbReference>
<dbReference type="PANTHER" id="PTHR43597:SF3">
    <property type="entry name" value="CYSTEINE DESULFURATION PROTEIN SUFE"/>
    <property type="match status" value="1"/>
</dbReference>
<dbReference type="PANTHER" id="PTHR43597">
    <property type="entry name" value="SULFUR ACCEPTOR PROTEIN CSDE"/>
    <property type="match status" value="1"/>
</dbReference>
<dbReference type="Pfam" id="PF02657">
    <property type="entry name" value="SufE"/>
    <property type="match status" value="1"/>
</dbReference>
<dbReference type="SUPFAM" id="SSF82649">
    <property type="entry name" value="SufE/NifU"/>
    <property type="match status" value="1"/>
</dbReference>
<comment type="function">
    <text evidence="1">Participates in cysteine desulfuration mediated by SufS. Cysteine desulfuration mobilizes sulfur from L-cysteine to yield L-alanine and constitutes an essential step in sulfur metabolism for biosynthesis of a variety of sulfur-containing biomolecules. Functions as a sulfur acceptor for SufS, by mediating the direct transfer of the sulfur atom from the S-sulfanylcysteine of SufS, an intermediate product of cysteine desulfuration process.</text>
</comment>
<comment type="pathway">
    <text evidence="1">Cofactor biosynthesis; iron-sulfur cluster biosynthesis.</text>
</comment>
<comment type="subunit">
    <text evidence="1">Homodimer. Interacts with SufS.</text>
</comment>
<comment type="subcellular location">
    <subcellularLocation>
        <location evidence="1">Cytoplasm</location>
    </subcellularLocation>
</comment>
<comment type="similarity">
    <text evidence="1">Belongs to the SufE family.</text>
</comment>
<accession>B7M0N4</accession>
<protein>
    <recommendedName>
        <fullName evidence="1">Cysteine desulfuration protein SufE</fullName>
    </recommendedName>
</protein>
<sequence length="138" mass="15756">MALLPDKEKLLRNFLRCANWEEKYLYIIELGQRLPELRAEDRSPQNSIQGCQSQVWIVMRQNAQGIIELQGDSDAAIVKGLIAVVFILYDQMTPQDIVNFDVRPWFEKMALTQHLTPSRSQGLEAMIRAIRAKAAALS</sequence>
<evidence type="ECO:0000255" key="1">
    <source>
        <dbReference type="HAMAP-Rule" id="MF_01832"/>
    </source>
</evidence>
<reference key="1">
    <citation type="journal article" date="2009" name="PLoS Genet.">
        <title>Organised genome dynamics in the Escherichia coli species results in highly diverse adaptive paths.</title>
        <authorList>
            <person name="Touchon M."/>
            <person name="Hoede C."/>
            <person name="Tenaillon O."/>
            <person name="Barbe V."/>
            <person name="Baeriswyl S."/>
            <person name="Bidet P."/>
            <person name="Bingen E."/>
            <person name="Bonacorsi S."/>
            <person name="Bouchier C."/>
            <person name="Bouvet O."/>
            <person name="Calteau A."/>
            <person name="Chiapello H."/>
            <person name="Clermont O."/>
            <person name="Cruveiller S."/>
            <person name="Danchin A."/>
            <person name="Diard M."/>
            <person name="Dossat C."/>
            <person name="Karoui M.E."/>
            <person name="Frapy E."/>
            <person name="Garry L."/>
            <person name="Ghigo J.M."/>
            <person name="Gilles A.M."/>
            <person name="Johnson J."/>
            <person name="Le Bouguenec C."/>
            <person name="Lescat M."/>
            <person name="Mangenot S."/>
            <person name="Martinez-Jehanne V."/>
            <person name="Matic I."/>
            <person name="Nassif X."/>
            <person name="Oztas S."/>
            <person name="Petit M.A."/>
            <person name="Pichon C."/>
            <person name="Rouy Z."/>
            <person name="Ruf C.S."/>
            <person name="Schneider D."/>
            <person name="Tourret J."/>
            <person name="Vacherie B."/>
            <person name="Vallenet D."/>
            <person name="Medigue C."/>
            <person name="Rocha E.P.C."/>
            <person name="Denamur E."/>
        </authorList>
    </citation>
    <scope>NUCLEOTIDE SEQUENCE [LARGE SCALE GENOMIC DNA]</scope>
    <source>
        <strain>IAI1</strain>
    </source>
</reference>
<proteinExistence type="inferred from homology"/>